<organism>
    <name type="scientific">Influenza A virus (strain A/Quail/Italy/1117/1965 H10N8)</name>
    <dbReference type="NCBI Taxonomy" id="38976"/>
    <lineage>
        <taxon>Viruses</taxon>
        <taxon>Riboviria</taxon>
        <taxon>Orthornavirae</taxon>
        <taxon>Negarnaviricota</taxon>
        <taxon>Polyploviricotina</taxon>
        <taxon>Insthoviricetes</taxon>
        <taxon>Articulavirales</taxon>
        <taxon>Orthomyxoviridae</taxon>
        <taxon>Alphainfluenzavirus</taxon>
        <taxon>Alphainfluenzavirus influenzae</taxon>
        <taxon>Influenza A virus</taxon>
    </lineage>
</organism>
<accession>Q07584</accession>
<sequence>MNPNKKIITIGSISLGLVVFNVLLHIVSIIVTVLVLGKGEKNGSCNETVVREYNETVKVEKVIQWHNTSVIEHIPYWNGGTYMNNTEAICDVKGFAPFSKDNGIRIGSRGHVFVIREPFVSCSPKECRTFFLTQGSLLNDKHSNGTVKDRSPFRTLMSVEVGQSPNVYQARFEAVAWSATACHDGKKWMTIGVTGPDSKAVAVIHYGGVPTDVINSWAGDILRTQESSCTCIQGDCYWVMTDGPANRQAQYRIYKANQGRIIGQIDVSFNGGHIEECSCYPNDGKVECVCRDNWTGTNRPILVISPDLSYRVGYLCAGLPSDTPRGVDAQFTGSCTSPMGNQGYGVKGFGFRQGSDVWMGRTISRTSRSGFEILRIKNGWTQTSKEQVGRQVVVDNLNWSGYSGSFTLPVEMSGRDCLVPCFWVEMIRGKPEEKTIWTSSSSIVMCGVDYKVADWTWHDGAILPFDIDKM</sequence>
<proteinExistence type="inferred from homology"/>
<name>NRAM_I65A0</name>
<reference key="1">
    <citation type="journal article" date="1993" name="Virology">
        <title>Phylogenetic analysis of the N8 neuraminidase gene of influenza A viruses.</title>
        <authorList>
            <person name="Saito T."/>
            <person name="Kawaoka Y."/>
            <person name="Webster R.G."/>
        </authorList>
    </citation>
    <scope>NUCLEOTIDE SEQUENCE [GENOMIC RNA]</scope>
</reference>
<reference key="2">
    <citation type="journal article" date="2004" name="Virus Res.">
        <title>Assembly and budding of influenza virus.</title>
        <authorList>
            <person name="Nayak D.P."/>
            <person name="Hui E.K."/>
            <person name="Barman S."/>
        </authorList>
    </citation>
    <scope>REVIEW</scope>
</reference>
<reference key="3">
    <citation type="journal article" date="2005" name="N. Engl. J. Med.">
        <title>Neuraminidase inhibitors for influenza.</title>
        <authorList>
            <person name="Moscona A."/>
        </authorList>
    </citation>
    <scope>REVIEW</scope>
</reference>
<reference key="4">
    <citation type="journal article" date="2005" name="Biol. Pharm. Bull.">
        <title>Sialobiology of influenza: molecular mechanism of host range variation of influenza viruses.</title>
        <authorList>
            <person name="Suzuki Y."/>
        </authorList>
    </citation>
    <scope>REVIEW</scope>
</reference>
<comment type="function">
    <text evidence="1">Catalyzes the removal of terminal sialic acid residues from viral and cellular glycoconjugates. Cleaves off the terminal sialic acids on the glycosylated HA during virus budding to facilitate virus release. Additionally helps virus spread through the circulation by further removing sialic acids from the cell surface. These cleavages prevent self-aggregation and ensure the efficient spread of the progeny virus from cell to cell. Otherwise, infection would be limited to one round of replication. Described as a receptor-destroying enzyme because it cleaves a terminal sialic acid from the cellular receptors. May facilitate viral invasion of the upper airways by cleaving the sialic acid moieties on the mucin of the airway epithelial cells. Likely to plays a role in the budding process through its association with lipid rafts during intracellular transport. May additionally display a raft-association independent effect on budding. Plays a role in the determination of host range restriction on replication and virulence. Sialidase activity in late endosome/lysosome traffic seems to enhance virus replication.</text>
</comment>
<comment type="catalytic activity">
    <reaction evidence="1">
        <text>Hydrolysis of alpha-(2-&gt;3)-, alpha-(2-&gt;6)-, alpha-(2-&gt;8)- glycosidic linkages of terminal sialic acid residues in oligosaccharides, glycoproteins, glycolipids, colominic acid and synthetic substrates.</text>
        <dbReference type="EC" id="3.2.1.18"/>
    </reaction>
</comment>
<comment type="cofactor">
    <cofactor evidence="1">
        <name>Ca(2+)</name>
        <dbReference type="ChEBI" id="CHEBI:29108"/>
    </cofactor>
</comment>
<comment type="activity regulation">
    <text evidence="1">Inhibited by the neuraminidase inhibitors zanamivir (Relenza) and oseltamivir (Tamiflu). These drugs interfere with the release of progeny virus from infected cells and are effective against all influenza strains. Resistance to neuraminidase inhibitors is quite rare.</text>
</comment>
<comment type="subunit">
    <text evidence="1">Homotetramer.</text>
</comment>
<comment type="subcellular location">
    <subcellularLocation>
        <location evidence="1">Virion membrane</location>
    </subcellularLocation>
    <subcellularLocation>
        <location evidence="1">Host apical cell membrane</location>
        <topology evidence="1">Single-pass type II membrane protein</topology>
    </subcellularLocation>
    <text evidence="1">Preferentially accumulates at the apical plasma membrane in infected polarized epithelial cells, which is the virus assembly site. Uses lipid rafts for cell surface transport and apical sorting. In the virion, forms a mushroom-shaped spike on the surface of the membrane.</text>
</comment>
<comment type="domain">
    <text evidence="1">Intact N-terminus is essential for virion morphogenesis. Possesses two apical sorting signals, one in the ectodomain, which is likely to be a glycan, and the other in the transmembrane domain. The transmembrane domain also plays a role in lipid raft association.</text>
</comment>
<comment type="PTM">
    <text evidence="1">N-glycosylated.</text>
</comment>
<comment type="miscellaneous">
    <text>The influenza A genome consist of 8 RNA segments. Genetic variation of hemagglutinin and/or neuraminidase genes results in the emergence of new influenza strains. The mechanism of variation can be the result of point mutations or the result of genetic reassortment between segments of two different strains.</text>
</comment>
<comment type="similarity">
    <text evidence="1">Belongs to the glycosyl hydrolase 34 family.</text>
</comment>
<dbReference type="EC" id="3.2.1.18" evidence="1"/>
<dbReference type="EMBL" id="L06587">
    <property type="protein sequence ID" value="AAA43373.1"/>
    <property type="molecule type" value="Genomic_RNA"/>
</dbReference>
<dbReference type="SMR" id="Q07584"/>
<dbReference type="CAZy" id="GH34">
    <property type="family name" value="Glycoside Hydrolase Family 34"/>
</dbReference>
<dbReference type="GlyCosmos" id="Q07584">
    <property type="glycosylation" value="8 sites, No reported glycans"/>
</dbReference>
<dbReference type="GO" id="GO:0020002">
    <property type="term" value="C:host cell plasma membrane"/>
    <property type="evidence" value="ECO:0007669"/>
    <property type="project" value="UniProtKB-SubCell"/>
</dbReference>
<dbReference type="GO" id="GO:0016020">
    <property type="term" value="C:membrane"/>
    <property type="evidence" value="ECO:0007669"/>
    <property type="project" value="UniProtKB-UniRule"/>
</dbReference>
<dbReference type="GO" id="GO:0055036">
    <property type="term" value="C:virion membrane"/>
    <property type="evidence" value="ECO:0007669"/>
    <property type="project" value="UniProtKB-SubCell"/>
</dbReference>
<dbReference type="GO" id="GO:0004308">
    <property type="term" value="F:exo-alpha-sialidase activity"/>
    <property type="evidence" value="ECO:0007669"/>
    <property type="project" value="UniProtKB-UniRule"/>
</dbReference>
<dbReference type="GO" id="GO:0046872">
    <property type="term" value="F:metal ion binding"/>
    <property type="evidence" value="ECO:0007669"/>
    <property type="project" value="UniProtKB-UniRule"/>
</dbReference>
<dbReference type="GO" id="GO:0005975">
    <property type="term" value="P:carbohydrate metabolic process"/>
    <property type="evidence" value="ECO:0007669"/>
    <property type="project" value="InterPro"/>
</dbReference>
<dbReference type="GO" id="GO:0046761">
    <property type="term" value="P:viral budding from plasma membrane"/>
    <property type="evidence" value="ECO:0007669"/>
    <property type="project" value="UniProtKB-UniRule"/>
</dbReference>
<dbReference type="Gene3D" id="2.120.10.10">
    <property type="match status" value="1"/>
</dbReference>
<dbReference type="HAMAP" id="MF_04071">
    <property type="entry name" value="INFV_NRAM"/>
    <property type="match status" value="1"/>
</dbReference>
<dbReference type="InterPro" id="IPR001860">
    <property type="entry name" value="Glyco_hydro_34"/>
</dbReference>
<dbReference type="InterPro" id="IPR036278">
    <property type="entry name" value="Sialidase_sf"/>
</dbReference>
<dbReference type="Pfam" id="PF00064">
    <property type="entry name" value="Neur"/>
    <property type="match status" value="1"/>
</dbReference>
<dbReference type="SUPFAM" id="SSF50939">
    <property type="entry name" value="Sialidases"/>
    <property type="match status" value="1"/>
</dbReference>
<protein>
    <recommendedName>
        <fullName evidence="1">Neuraminidase</fullName>
        <ecNumber evidence="1">3.2.1.18</ecNumber>
    </recommendedName>
</protein>
<evidence type="ECO:0000255" key="1">
    <source>
        <dbReference type="HAMAP-Rule" id="MF_04071"/>
    </source>
</evidence>
<organismHost>
    <name type="scientific">Aves</name>
    <dbReference type="NCBI Taxonomy" id="8782"/>
</organismHost>
<feature type="chain" id="PRO_0000078713" description="Neuraminidase">
    <location>
        <begin position="1"/>
        <end position="470"/>
    </location>
</feature>
<feature type="topological domain" description="Intravirion" evidence="1">
    <location>
        <begin position="1"/>
        <end position="14"/>
    </location>
</feature>
<feature type="transmembrane region" description="Helical" evidence="1">
    <location>
        <begin position="15"/>
        <end position="35"/>
    </location>
</feature>
<feature type="topological domain" description="Virion surface" evidence="1">
    <location>
        <begin position="36"/>
        <end position="470"/>
    </location>
</feature>
<feature type="region of interest" description="Involved in apical transport and lipid raft association" evidence="1">
    <location>
        <begin position="11"/>
        <end position="32"/>
    </location>
</feature>
<feature type="region of interest" description="Hypervariable stalk region" evidence="1">
    <location>
        <begin position="32"/>
        <end position="86"/>
    </location>
</feature>
<feature type="region of interest" description="Head of neuraminidase" evidence="1">
    <location>
        <begin position="89"/>
        <end position="470"/>
    </location>
</feature>
<feature type="active site" description="Proton donor/acceptor" evidence="1">
    <location>
        <position position="149"/>
    </location>
</feature>
<feature type="active site" description="Nucleophile" evidence="1">
    <location>
        <position position="402"/>
    </location>
</feature>
<feature type="binding site" evidence="1">
    <location>
        <position position="116"/>
    </location>
    <ligand>
        <name>substrate</name>
    </ligand>
</feature>
<feature type="binding site" evidence="1">
    <location>
        <position position="150"/>
    </location>
    <ligand>
        <name>substrate</name>
    </ligand>
</feature>
<feature type="binding site" evidence="1">
    <location>
        <begin position="275"/>
        <end position="276"/>
    </location>
    <ligand>
        <name>substrate</name>
    </ligand>
</feature>
<feature type="binding site" evidence="1">
    <location>
        <position position="291"/>
    </location>
    <ligand>
        <name>substrate</name>
    </ligand>
</feature>
<feature type="binding site" evidence="1">
    <location>
        <position position="292"/>
    </location>
    <ligand>
        <name>Ca(2+)</name>
        <dbReference type="ChEBI" id="CHEBI:29108"/>
    </ligand>
</feature>
<feature type="binding site" evidence="1">
    <location>
        <position position="296"/>
    </location>
    <ligand>
        <name>Ca(2+)</name>
        <dbReference type="ChEBI" id="CHEBI:29108"/>
    </ligand>
</feature>
<feature type="binding site" evidence="1">
    <location>
        <position position="322"/>
    </location>
    <ligand>
        <name>Ca(2+)</name>
        <dbReference type="ChEBI" id="CHEBI:29108"/>
    </ligand>
</feature>
<feature type="binding site" evidence="1">
    <location>
        <position position="368"/>
    </location>
    <ligand>
        <name>substrate</name>
    </ligand>
</feature>
<feature type="glycosylation site" description="N-linked (GlcNAc...) asparagine; by host" evidence="1">
    <location>
        <position position="42"/>
    </location>
</feature>
<feature type="glycosylation site" description="N-linked (GlcNAc...) asparagine; by host" evidence="1">
    <location>
        <position position="46"/>
    </location>
</feature>
<feature type="glycosylation site" description="N-linked (GlcNAc...) asparagine; by host" evidence="1">
    <location>
        <position position="54"/>
    </location>
</feature>
<feature type="glycosylation site" description="N-linked (GlcNAc...) asparagine; by host" evidence="1">
    <location>
        <position position="67"/>
    </location>
</feature>
<feature type="glycosylation site" description="N-linked (GlcNAc...) asparagine; by host" evidence="1">
    <location>
        <position position="84"/>
    </location>
</feature>
<feature type="glycosylation site" description="N-linked (GlcNAc...) asparagine; by host" evidence="1">
    <location>
        <position position="144"/>
    </location>
</feature>
<feature type="glycosylation site" description="N-linked (GlcNAc...) asparagine; by host" evidence="1">
    <location>
        <position position="293"/>
    </location>
</feature>
<feature type="glycosylation site" description="N-linked (GlcNAc...) asparagine; by host" evidence="1">
    <location>
        <position position="398"/>
    </location>
</feature>
<feature type="disulfide bond" evidence="1">
    <location>
        <begin position="90"/>
        <end position="417"/>
    </location>
</feature>
<feature type="disulfide bond" evidence="1">
    <location>
        <begin position="122"/>
        <end position="127"/>
    </location>
</feature>
<feature type="disulfide bond" evidence="1">
    <location>
        <begin position="182"/>
        <end position="229"/>
    </location>
</feature>
<feature type="disulfide bond" evidence="1">
    <location>
        <begin position="231"/>
        <end position="236"/>
    </location>
</feature>
<feature type="disulfide bond" evidence="1">
    <location>
        <begin position="277"/>
        <end position="290"/>
    </location>
</feature>
<feature type="disulfide bond" evidence="1">
    <location>
        <begin position="279"/>
        <end position="288"/>
    </location>
</feature>
<feature type="disulfide bond" evidence="1">
    <location>
        <begin position="316"/>
        <end position="335"/>
    </location>
</feature>
<feature type="disulfide bond" evidence="1">
    <location>
        <begin position="421"/>
        <end position="446"/>
    </location>
</feature>
<keyword id="KW-0106">Calcium</keyword>
<keyword id="KW-1015">Disulfide bond</keyword>
<keyword id="KW-0325">Glycoprotein</keyword>
<keyword id="KW-0326">Glycosidase</keyword>
<keyword id="KW-1032">Host cell membrane</keyword>
<keyword id="KW-1043">Host membrane</keyword>
<keyword id="KW-0378">Hydrolase</keyword>
<keyword id="KW-0472">Membrane</keyword>
<keyword id="KW-0479">Metal-binding</keyword>
<keyword id="KW-0735">Signal-anchor</keyword>
<keyword id="KW-0812">Transmembrane</keyword>
<keyword id="KW-1133">Transmembrane helix</keyword>
<keyword id="KW-0946">Virion</keyword>
<gene>
    <name evidence="1" type="primary">NA</name>
</gene>